<reference key="1">
    <citation type="journal article" date="1998" name="J. Zool. (Lond.)">
        <title>Phylogenetic relationships of otters (Carnivora: Mustelidae) based on mitochondrial cytochrome b sequences.</title>
        <authorList>
            <person name="Koepfli K.-P."/>
            <person name="Wayne R.K."/>
        </authorList>
    </citation>
    <scope>NUCLEOTIDE SEQUENCE [GENOMIC DNA]</scope>
</reference>
<feature type="chain" id="PRO_0000061133" description="Cytochrome b">
    <location>
        <begin position="1"/>
        <end position="379"/>
    </location>
</feature>
<feature type="transmembrane region" description="Helical" evidence="2">
    <location>
        <begin position="33"/>
        <end position="53"/>
    </location>
</feature>
<feature type="transmembrane region" description="Helical" evidence="2">
    <location>
        <begin position="77"/>
        <end position="98"/>
    </location>
</feature>
<feature type="transmembrane region" description="Helical" evidence="2">
    <location>
        <begin position="113"/>
        <end position="133"/>
    </location>
</feature>
<feature type="transmembrane region" description="Helical" evidence="2">
    <location>
        <begin position="178"/>
        <end position="198"/>
    </location>
</feature>
<feature type="transmembrane region" description="Helical" evidence="2">
    <location>
        <begin position="226"/>
        <end position="246"/>
    </location>
</feature>
<feature type="transmembrane region" description="Helical" evidence="2">
    <location>
        <begin position="288"/>
        <end position="308"/>
    </location>
</feature>
<feature type="transmembrane region" description="Helical" evidence="2">
    <location>
        <begin position="320"/>
        <end position="340"/>
    </location>
</feature>
<feature type="transmembrane region" description="Helical" evidence="2">
    <location>
        <begin position="347"/>
        <end position="367"/>
    </location>
</feature>
<feature type="binding site" description="axial binding residue" evidence="2">
    <location>
        <position position="83"/>
    </location>
    <ligand>
        <name>heme b</name>
        <dbReference type="ChEBI" id="CHEBI:60344"/>
        <label>b562</label>
    </ligand>
    <ligandPart>
        <name>Fe</name>
        <dbReference type="ChEBI" id="CHEBI:18248"/>
    </ligandPart>
</feature>
<feature type="binding site" description="axial binding residue" evidence="2">
    <location>
        <position position="97"/>
    </location>
    <ligand>
        <name>heme b</name>
        <dbReference type="ChEBI" id="CHEBI:60344"/>
        <label>b566</label>
    </ligand>
    <ligandPart>
        <name>Fe</name>
        <dbReference type="ChEBI" id="CHEBI:18248"/>
    </ligandPart>
</feature>
<feature type="binding site" description="axial binding residue" evidence="2">
    <location>
        <position position="182"/>
    </location>
    <ligand>
        <name>heme b</name>
        <dbReference type="ChEBI" id="CHEBI:60344"/>
        <label>b562</label>
    </ligand>
    <ligandPart>
        <name>Fe</name>
        <dbReference type="ChEBI" id="CHEBI:18248"/>
    </ligandPart>
</feature>
<feature type="binding site" description="axial binding residue" evidence="2">
    <location>
        <position position="196"/>
    </location>
    <ligand>
        <name>heme b</name>
        <dbReference type="ChEBI" id="CHEBI:60344"/>
        <label>b566</label>
    </ligand>
    <ligandPart>
        <name>Fe</name>
        <dbReference type="ChEBI" id="CHEBI:18248"/>
    </ligandPart>
</feature>
<feature type="binding site" evidence="2">
    <location>
        <position position="201"/>
    </location>
    <ligand>
        <name>a ubiquinone</name>
        <dbReference type="ChEBI" id="CHEBI:16389"/>
    </ligand>
</feature>
<sequence length="379" mass="42359">MTNIRKTHPLAKIINDSFIDLPAPSNISAWWNFGSLLGICLIIQILTGLFLAMHYTSDTTTAFSSVTHICRDVNYGWIIRYMHANGASLFFICLFLHVGRGLYYGSYMFPETWNIGIILLFTVMATAFMGYVLPWGQMSFWGATVITNLLSAIPYIGTNLVEWIWGGFSVDKATLTRFFTFHFILPFIVSTLAAIHLLFLHETGSNNPSGIPSDSDKIPFHPYYTVKDALGALLLILALMTLVLFSPDLLGDPDNYIPANPLNTPPHIKPEWYFLFAYAILRSIPSKLGGVLALVLSISVLAIIPLLHTSKQRGMMFRPLSQCLFWLLVADLLTLTWIGGQPVEHPFIIIGQLASILYFAILLILMPAVGIIENSLLKW</sequence>
<keyword id="KW-0249">Electron transport</keyword>
<keyword id="KW-0349">Heme</keyword>
<keyword id="KW-0408">Iron</keyword>
<keyword id="KW-0472">Membrane</keyword>
<keyword id="KW-0479">Metal-binding</keyword>
<keyword id="KW-0496">Mitochondrion</keyword>
<keyword id="KW-0999">Mitochondrion inner membrane</keyword>
<keyword id="KW-0679">Respiratory chain</keyword>
<keyword id="KW-0812">Transmembrane</keyword>
<keyword id="KW-1133">Transmembrane helix</keyword>
<keyword id="KW-0813">Transport</keyword>
<keyword id="KW-0830">Ubiquinone</keyword>
<protein>
    <recommendedName>
        <fullName>Cytochrome b</fullName>
    </recommendedName>
    <alternativeName>
        <fullName>Complex III subunit 3</fullName>
    </alternativeName>
    <alternativeName>
        <fullName>Complex III subunit III</fullName>
    </alternativeName>
    <alternativeName>
        <fullName>Cytochrome b-c1 complex subunit 3</fullName>
    </alternativeName>
    <alternativeName>
        <fullName>Ubiquinol-cytochrome-c reductase complex cytochrome b subunit</fullName>
    </alternativeName>
</protein>
<dbReference type="EMBL" id="AF057123">
    <property type="protein sequence ID" value="AAC33703.1"/>
    <property type="molecule type" value="Genomic_DNA"/>
</dbReference>
<dbReference type="SMR" id="O78931"/>
<dbReference type="GO" id="GO:0005743">
    <property type="term" value="C:mitochondrial inner membrane"/>
    <property type="evidence" value="ECO:0007669"/>
    <property type="project" value="UniProtKB-SubCell"/>
</dbReference>
<dbReference type="GO" id="GO:0045275">
    <property type="term" value="C:respiratory chain complex III"/>
    <property type="evidence" value="ECO:0007669"/>
    <property type="project" value="InterPro"/>
</dbReference>
<dbReference type="GO" id="GO:0046872">
    <property type="term" value="F:metal ion binding"/>
    <property type="evidence" value="ECO:0007669"/>
    <property type="project" value="UniProtKB-KW"/>
</dbReference>
<dbReference type="GO" id="GO:0008121">
    <property type="term" value="F:ubiquinol-cytochrome-c reductase activity"/>
    <property type="evidence" value="ECO:0007669"/>
    <property type="project" value="InterPro"/>
</dbReference>
<dbReference type="GO" id="GO:0006122">
    <property type="term" value="P:mitochondrial electron transport, ubiquinol to cytochrome c"/>
    <property type="evidence" value="ECO:0007669"/>
    <property type="project" value="TreeGrafter"/>
</dbReference>
<dbReference type="CDD" id="cd00290">
    <property type="entry name" value="cytochrome_b_C"/>
    <property type="match status" value="1"/>
</dbReference>
<dbReference type="CDD" id="cd00284">
    <property type="entry name" value="Cytochrome_b_N"/>
    <property type="match status" value="1"/>
</dbReference>
<dbReference type="FunFam" id="1.20.810.10:FF:000002">
    <property type="entry name" value="Cytochrome b"/>
    <property type="match status" value="1"/>
</dbReference>
<dbReference type="Gene3D" id="1.20.810.10">
    <property type="entry name" value="Cytochrome Bc1 Complex, Chain C"/>
    <property type="match status" value="1"/>
</dbReference>
<dbReference type="InterPro" id="IPR005798">
    <property type="entry name" value="Cyt_b/b6_C"/>
</dbReference>
<dbReference type="InterPro" id="IPR036150">
    <property type="entry name" value="Cyt_b/b6_C_sf"/>
</dbReference>
<dbReference type="InterPro" id="IPR005797">
    <property type="entry name" value="Cyt_b/b6_N"/>
</dbReference>
<dbReference type="InterPro" id="IPR027387">
    <property type="entry name" value="Cytb/b6-like_sf"/>
</dbReference>
<dbReference type="InterPro" id="IPR030689">
    <property type="entry name" value="Cytochrome_b"/>
</dbReference>
<dbReference type="InterPro" id="IPR048260">
    <property type="entry name" value="Cytochrome_b_C_euk/bac"/>
</dbReference>
<dbReference type="InterPro" id="IPR048259">
    <property type="entry name" value="Cytochrome_b_N_euk/bac"/>
</dbReference>
<dbReference type="InterPro" id="IPR016174">
    <property type="entry name" value="Di-haem_cyt_TM"/>
</dbReference>
<dbReference type="PANTHER" id="PTHR19271">
    <property type="entry name" value="CYTOCHROME B"/>
    <property type="match status" value="1"/>
</dbReference>
<dbReference type="PANTHER" id="PTHR19271:SF16">
    <property type="entry name" value="CYTOCHROME B"/>
    <property type="match status" value="1"/>
</dbReference>
<dbReference type="Pfam" id="PF00032">
    <property type="entry name" value="Cytochrom_B_C"/>
    <property type="match status" value="1"/>
</dbReference>
<dbReference type="Pfam" id="PF00033">
    <property type="entry name" value="Cytochrome_B"/>
    <property type="match status" value="1"/>
</dbReference>
<dbReference type="PIRSF" id="PIRSF038885">
    <property type="entry name" value="COB"/>
    <property type="match status" value="1"/>
</dbReference>
<dbReference type="SUPFAM" id="SSF81648">
    <property type="entry name" value="a domain/subunit of cytochrome bc1 complex (Ubiquinol-cytochrome c reductase)"/>
    <property type="match status" value="1"/>
</dbReference>
<dbReference type="SUPFAM" id="SSF81342">
    <property type="entry name" value="Transmembrane di-heme cytochromes"/>
    <property type="match status" value="1"/>
</dbReference>
<dbReference type="PROSITE" id="PS51003">
    <property type="entry name" value="CYTB_CTER"/>
    <property type="match status" value="1"/>
</dbReference>
<dbReference type="PROSITE" id="PS51002">
    <property type="entry name" value="CYTB_NTER"/>
    <property type="match status" value="1"/>
</dbReference>
<accession>O78931</accession>
<geneLocation type="mitochondrion"/>
<comment type="function">
    <text evidence="2">Component of the ubiquinol-cytochrome c reductase complex (complex III or cytochrome b-c1 complex) that is part of the mitochondrial respiratory chain. The b-c1 complex mediates electron transfer from ubiquinol to cytochrome c. Contributes to the generation of a proton gradient across the mitochondrial membrane that is then used for ATP synthesis.</text>
</comment>
<comment type="cofactor">
    <cofactor evidence="2">
        <name>heme b</name>
        <dbReference type="ChEBI" id="CHEBI:60344"/>
    </cofactor>
    <text evidence="2">Binds 2 heme b groups non-covalently.</text>
</comment>
<comment type="subunit">
    <text evidence="2">The cytochrome bc1 complex contains 11 subunits: 3 respiratory subunits (MT-CYB, CYC1 and UQCRFS1), 2 core proteins (UQCRC1 and UQCRC2) and 6 low-molecular weight proteins (UQCRH/QCR6, UQCRB/QCR7, UQCRQ/QCR8, UQCR10/QCR9, UQCR11/QCR10 and a cleavage product of UQCRFS1). This cytochrome bc1 complex then forms a dimer.</text>
</comment>
<comment type="subcellular location">
    <subcellularLocation>
        <location evidence="2">Mitochondrion inner membrane</location>
        <topology evidence="2">Multi-pass membrane protein</topology>
    </subcellularLocation>
</comment>
<comment type="miscellaneous">
    <text evidence="1">Heme 1 (or BL or b562) is low-potential and absorbs at about 562 nm, and heme 2 (or BH or b566) is high-potential and absorbs at about 566 nm.</text>
</comment>
<comment type="similarity">
    <text evidence="3 4">Belongs to the cytochrome b family.</text>
</comment>
<comment type="caution">
    <text evidence="2">The full-length protein contains only eight transmembrane helices, not nine as predicted by bioinformatics tools.</text>
</comment>
<name>CYB_LONLO</name>
<gene>
    <name type="primary">MT-CYB</name>
    <name type="synonym">COB</name>
    <name type="synonym">CYTB</name>
    <name type="synonym">MTCYB</name>
</gene>
<organism>
    <name type="scientific">Lontra longicaudis</name>
    <name type="common">Neotropical otter</name>
    <name type="synonym">Lutra longicaudis</name>
    <dbReference type="NCBI Taxonomy" id="71113"/>
    <lineage>
        <taxon>Eukaryota</taxon>
        <taxon>Metazoa</taxon>
        <taxon>Chordata</taxon>
        <taxon>Craniata</taxon>
        <taxon>Vertebrata</taxon>
        <taxon>Euteleostomi</taxon>
        <taxon>Mammalia</taxon>
        <taxon>Eutheria</taxon>
        <taxon>Laurasiatheria</taxon>
        <taxon>Carnivora</taxon>
        <taxon>Caniformia</taxon>
        <taxon>Musteloidea</taxon>
        <taxon>Mustelidae</taxon>
        <taxon>Lutrinae</taxon>
        <taxon>Lontra</taxon>
    </lineage>
</organism>
<proteinExistence type="inferred from homology"/>
<evidence type="ECO:0000250" key="1"/>
<evidence type="ECO:0000250" key="2">
    <source>
        <dbReference type="UniProtKB" id="P00157"/>
    </source>
</evidence>
<evidence type="ECO:0000255" key="3">
    <source>
        <dbReference type="PROSITE-ProRule" id="PRU00967"/>
    </source>
</evidence>
<evidence type="ECO:0000255" key="4">
    <source>
        <dbReference type="PROSITE-ProRule" id="PRU00968"/>
    </source>
</evidence>